<organism>
    <name type="scientific">Thermoanaerobacter sp. (strain X514)</name>
    <dbReference type="NCBI Taxonomy" id="399726"/>
    <lineage>
        <taxon>Bacteria</taxon>
        <taxon>Bacillati</taxon>
        <taxon>Bacillota</taxon>
        <taxon>Clostridia</taxon>
        <taxon>Thermoanaerobacterales</taxon>
        <taxon>Thermoanaerobacteraceae</taxon>
        <taxon>Thermoanaerobacter</taxon>
    </lineage>
</organism>
<name>G6PI_THEPX</name>
<comment type="function">
    <text evidence="1">Catalyzes the reversible isomerization of glucose-6-phosphate to fructose-6-phosphate.</text>
</comment>
<comment type="catalytic activity">
    <reaction evidence="1">
        <text>alpha-D-glucose 6-phosphate = beta-D-fructose 6-phosphate</text>
        <dbReference type="Rhea" id="RHEA:11816"/>
        <dbReference type="ChEBI" id="CHEBI:57634"/>
        <dbReference type="ChEBI" id="CHEBI:58225"/>
        <dbReference type="EC" id="5.3.1.9"/>
    </reaction>
</comment>
<comment type="pathway">
    <text evidence="1">Carbohydrate biosynthesis; gluconeogenesis.</text>
</comment>
<comment type="pathway">
    <text evidence="1">Carbohydrate degradation; glycolysis; D-glyceraldehyde 3-phosphate and glycerone phosphate from D-glucose: step 2/4.</text>
</comment>
<comment type="subcellular location">
    <subcellularLocation>
        <location evidence="1">Cytoplasm</location>
    </subcellularLocation>
</comment>
<comment type="similarity">
    <text evidence="1">Belongs to the GPI family.</text>
</comment>
<sequence length="451" mass="50670">MRKLISFDYSKALQFVSEKEIEYMERHAKLSLDMVLSKNAQGNDFLGWVSLPKDYDKAEFERIKKAAEKIKSDSDVLVVIGIGGSYLGARAAIEMLSHSFYNLLPKGKRNMPEIYFAGNSISSTYLSDLFELIEDKDVSINVISKSGTTTEPAIAFRVFRDFLEKKYGKEGAKSRIYVTTDRAKGALKKLADEEGYETFVIPDNVGGRYSVLTAVGLLPIAVAGISIDDMMQGAYDASTVYTKDNLNENISMQYAILRNILYRKGKAIEILVNYEPKLHYFSEWWKQLFGESEGKDNKGIYPASVDFTTDLHSMGQFIQEGSRNIFETVLNVEKPVKDIVINEDKDNIDGLNFLAGKTIDFVNKKAFEGTLLAHTDGNVPNLVVNIPEISAYYFGNLVYFFEMACAISGYINGVNPFDQPGVEAYKKNMFALLGKPGYEKEKELLEKRLGK</sequence>
<feature type="chain" id="PRO_1000125770" description="Glucose-6-phosphate isomerase">
    <location>
        <begin position="1"/>
        <end position="451"/>
    </location>
</feature>
<feature type="active site" description="Proton donor" evidence="1">
    <location>
        <position position="291"/>
    </location>
</feature>
<feature type="active site" evidence="1">
    <location>
        <position position="312"/>
    </location>
</feature>
<feature type="active site" evidence="1">
    <location>
        <position position="426"/>
    </location>
</feature>
<reference key="1">
    <citation type="submission" date="2008-01" db="EMBL/GenBank/DDBJ databases">
        <title>Complete sequence of Thermoanaerobacter sp. X514.</title>
        <authorList>
            <consortium name="US DOE Joint Genome Institute"/>
            <person name="Copeland A."/>
            <person name="Lucas S."/>
            <person name="Lapidus A."/>
            <person name="Barry K."/>
            <person name="Glavina del Rio T."/>
            <person name="Dalin E."/>
            <person name="Tice H."/>
            <person name="Pitluck S."/>
            <person name="Bruce D."/>
            <person name="Goodwin L."/>
            <person name="Saunders E."/>
            <person name="Brettin T."/>
            <person name="Detter J.C."/>
            <person name="Han C."/>
            <person name="Schmutz J."/>
            <person name="Larimer F."/>
            <person name="Land M."/>
            <person name="Hauser L."/>
            <person name="Kyrpides N."/>
            <person name="Kim E."/>
            <person name="Hemme C."/>
            <person name="Fields M.W."/>
            <person name="He Z."/>
            <person name="Zhou J."/>
            <person name="Richardson P."/>
        </authorList>
    </citation>
    <scope>NUCLEOTIDE SEQUENCE [LARGE SCALE GENOMIC DNA]</scope>
    <source>
        <strain>X514</strain>
    </source>
</reference>
<accession>B0K6M6</accession>
<evidence type="ECO:0000255" key="1">
    <source>
        <dbReference type="HAMAP-Rule" id="MF_00473"/>
    </source>
</evidence>
<dbReference type="EC" id="5.3.1.9" evidence="1"/>
<dbReference type="EMBL" id="CP000923">
    <property type="protein sequence ID" value="ABY92502.1"/>
    <property type="molecule type" value="Genomic_DNA"/>
</dbReference>
<dbReference type="RefSeq" id="WP_009052926.1">
    <property type="nucleotide sequence ID" value="NC_010320.1"/>
</dbReference>
<dbReference type="SMR" id="B0K6M6"/>
<dbReference type="KEGG" id="tex:Teth514_1208"/>
<dbReference type="HOGENOM" id="CLU_037303_0_1_9"/>
<dbReference type="UniPathway" id="UPA00109">
    <property type="reaction ID" value="UER00181"/>
</dbReference>
<dbReference type="UniPathway" id="UPA00138"/>
<dbReference type="Proteomes" id="UP000002155">
    <property type="component" value="Chromosome"/>
</dbReference>
<dbReference type="GO" id="GO:0005829">
    <property type="term" value="C:cytosol"/>
    <property type="evidence" value="ECO:0007669"/>
    <property type="project" value="TreeGrafter"/>
</dbReference>
<dbReference type="GO" id="GO:0097367">
    <property type="term" value="F:carbohydrate derivative binding"/>
    <property type="evidence" value="ECO:0007669"/>
    <property type="project" value="InterPro"/>
</dbReference>
<dbReference type="GO" id="GO:0004347">
    <property type="term" value="F:glucose-6-phosphate isomerase activity"/>
    <property type="evidence" value="ECO:0007669"/>
    <property type="project" value="UniProtKB-UniRule"/>
</dbReference>
<dbReference type="GO" id="GO:0048029">
    <property type="term" value="F:monosaccharide binding"/>
    <property type="evidence" value="ECO:0007669"/>
    <property type="project" value="TreeGrafter"/>
</dbReference>
<dbReference type="GO" id="GO:0006094">
    <property type="term" value="P:gluconeogenesis"/>
    <property type="evidence" value="ECO:0007669"/>
    <property type="project" value="UniProtKB-UniRule"/>
</dbReference>
<dbReference type="GO" id="GO:0051156">
    <property type="term" value="P:glucose 6-phosphate metabolic process"/>
    <property type="evidence" value="ECO:0007669"/>
    <property type="project" value="TreeGrafter"/>
</dbReference>
<dbReference type="GO" id="GO:0006096">
    <property type="term" value="P:glycolytic process"/>
    <property type="evidence" value="ECO:0007669"/>
    <property type="project" value="UniProtKB-UniRule"/>
</dbReference>
<dbReference type="CDD" id="cd05015">
    <property type="entry name" value="SIS_PGI_1"/>
    <property type="match status" value="1"/>
</dbReference>
<dbReference type="CDD" id="cd05016">
    <property type="entry name" value="SIS_PGI_2"/>
    <property type="match status" value="1"/>
</dbReference>
<dbReference type="FunFam" id="3.40.50.10490:FF:000015">
    <property type="entry name" value="Glucose-6-phosphate isomerase"/>
    <property type="match status" value="1"/>
</dbReference>
<dbReference type="FunFam" id="3.40.50.10490:FF:000016">
    <property type="entry name" value="Glucose-6-phosphate isomerase"/>
    <property type="match status" value="1"/>
</dbReference>
<dbReference type="Gene3D" id="3.40.50.10490">
    <property type="entry name" value="Glucose-6-phosphate isomerase like protein, domain 1"/>
    <property type="match status" value="2"/>
</dbReference>
<dbReference type="HAMAP" id="MF_00473">
    <property type="entry name" value="G6P_isomerase"/>
    <property type="match status" value="1"/>
</dbReference>
<dbReference type="InterPro" id="IPR001672">
    <property type="entry name" value="G6P_Isomerase"/>
</dbReference>
<dbReference type="InterPro" id="IPR018189">
    <property type="entry name" value="Phosphoglucose_isomerase_CS"/>
</dbReference>
<dbReference type="InterPro" id="IPR046348">
    <property type="entry name" value="SIS_dom_sf"/>
</dbReference>
<dbReference type="InterPro" id="IPR035476">
    <property type="entry name" value="SIS_PGI_1"/>
</dbReference>
<dbReference type="InterPro" id="IPR035482">
    <property type="entry name" value="SIS_PGI_2"/>
</dbReference>
<dbReference type="NCBIfam" id="NF010697">
    <property type="entry name" value="PRK14097.1"/>
    <property type="match status" value="1"/>
</dbReference>
<dbReference type="PANTHER" id="PTHR11469">
    <property type="entry name" value="GLUCOSE-6-PHOSPHATE ISOMERASE"/>
    <property type="match status" value="1"/>
</dbReference>
<dbReference type="PANTHER" id="PTHR11469:SF1">
    <property type="entry name" value="GLUCOSE-6-PHOSPHATE ISOMERASE"/>
    <property type="match status" value="1"/>
</dbReference>
<dbReference type="Pfam" id="PF00342">
    <property type="entry name" value="PGI"/>
    <property type="match status" value="1"/>
</dbReference>
<dbReference type="PRINTS" id="PR00662">
    <property type="entry name" value="G6PISOMERASE"/>
</dbReference>
<dbReference type="SUPFAM" id="SSF53697">
    <property type="entry name" value="SIS domain"/>
    <property type="match status" value="1"/>
</dbReference>
<dbReference type="PROSITE" id="PS00765">
    <property type="entry name" value="P_GLUCOSE_ISOMERASE_1"/>
    <property type="match status" value="1"/>
</dbReference>
<dbReference type="PROSITE" id="PS00174">
    <property type="entry name" value="P_GLUCOSE_ISOMERASE_2"/>
    <property type="match status" value="1"/>
</dbReference>
<dbReference type="PROSITE" id="PS51463">
    <property type="entry name" value="P_GLUCOSE_ISOMERASE_3"/>
    <property type="match status" value="1"/>
</dbReference>
<proteinExistence type="inferred from homology"/>
<gene>
    <name evidence="1" type="primary">pgi</name>
    <name type="ordered locus">Teth514_1208</name>
</gene>
<protein>
    <recommendedName>
        <fullName evidence="1">Glucose-6-phosphate isomerase</fullName>
        <shortName evidence="1">GPI</shortName>
        <ecNumber evidence="1">5.3.1.9</ecNumber>
    </recommendedName>
    <alternativeName>
        <fullName evidence="1">Phosphoglucose isomerase</fullName>
        <shortName evidence="1">PGI</shortName>
    </alternativeName>
    <alternativeName>
        <fullName evidence="1">Phosphohexose isomerase</fullName>
        <shortName evidence="1">PHI</shortName>
    </alternativeName>
</protein>
<keyword id="KW-0963">Cytoplasm</keyword>
<keyword id="KW-0312">Gluconeogenesis</keyword>
<keyword id="KW-0324">Glycolysis</keyword>
<keyword id="KW-0413">Isomerase</keyword>